<sequence length="179" mass="20808">MAVSRITRWRLMSVIFGIKCLFLMVTLGVLLINSFTIQNIQSTPSPTTTVEFQEVSECCVCLDKWVGHQCNCYFISKEEKSWKRSRDFCASQNSSLLQPQSRNELSFMNFSQTFFWIGMHYSEKRNAWLWEDGTVPSKDLFPEFSVIRPEHCIVYSPSKSVSAESCENKNRYICKKLPI</sequence>
<protein>
    <recommendedName>
        <fullName>Natural killer cells antigen CD94</fullName>
    </recommendedName>
    <alternativeName>
        <fullName>Killer cell lectin-like receptor subfamily D member 1</fullName>
    </alternativeName>
    <cdAntigenName>CD94</cdAntigenName>
</protein>
<dbReference type="EMBL" id="AF030311">
    <property type="protein sequence ID" value="AAC28243.1"/>
    <property type="molecule type" value="mRNA"/>
</dbReference>
<dbReference type="EMBL" id="AF030312">
    <property type="protein sequence ID" value="AAC28244.1"/>
    <property type="molecule type" value="mRNA"/>
</dbReference>
<dbReference type="EMBL" id="AF057714">
    <property type="protein sequence ID" value="AAC33713.1"/>
    <property type="molecule type" value="mRNA"/>
</dbReference>
<dbReference type="EMBL" id="AF039025">
    <property type="protein sequence ID" value="AAD02116.1"/>
    <property type="molecule type" value="mRNA"/>
</dbReference>
<dbReference type="EMBL" id="AK136548">
    <property type="protein sequence ID" value="BAE23039.1"/>
    <property type="molecule type" value="mRNA"/>
</dbReference>
<dbReference type="EMBL" id="CH466523">
    <property type="protein sequence ID" value="EDK99936.1"/>
    <property type="molecule type" value="Genomic_DNA"/>
</dbReference>
<dbReference type="EMBL" id="BC117112">
    <property type="protein sequence ID" value="AAI17113.1"/>
    <property type="molecule type" value="mRNA"/>
</dbReference>
<dbReference type="EMBL" id="BC120854">
    <property type="protein sequence ID" value="AAI20855.1"/>
    <property type="molecule type" value="mRNA"/>
</dbReference>
<dbReference type="CCDS" id="CCDS57456.1"/>
<dbReference type="RefSeq" id="NP_034784.1">
    <property type="nucleotide sequence ID" value="NM_010654.4"/>
</dbReference>
<dbReference type="RefSeq" id="XP_006505718.1">
    <property type="nucleotide sequence ID" value="XM_006505655.3"/>
</dbReference>
<dbReference type="SMR" id="O54707"/>
<dbReference type="ComplexPortal" id="CPX-5900">
    <property type="entry name" value="CD94-NKG2A natural killer receptor complex"/>
</dbReference>
<dbReference type="ComplexPortal" id="CPX-5902">
    <property type="entry name" value="CD94-NKG2C natural killer receptor complex"/>
</dbReference>
<dbReference type="ComplexPortal" id="CPX-5904">
    <property type="entry name" value="CD94-NKG2E natural killer receptor complex"/>
</dbReference>
<dbReference type="FunCoup" id="O54707">
    <property type="interactions" value="246"/>
</dbReference>
<dbReference type="STRING" id="10090.ENSMUSP00000107694"/>
<dbReference type="GlyCosmos" id="O54707">
    <property type="glycosylation" value="2 sites, No reported glycans"/>
</dbReference>
<dbReference type="GlyGen" id="O54707">
    <property type="glycosylation" value="2 sites"/>
</dbReference>
<dbReference type="PhosphoSitePlus" id="O54707"/>
<dbReference type="PaxDb" id="10090-ENSMUSP00000107694"/>
<dbReference type="ProteomicsDB" id="263559"/>
<dbReference type="Antibodypedia" id="11712">
    <property type="antibodies" value="881 antibodies from 36 providers"/>
</dbReference>
<dbReference type="DNASU" id="16643"/>
<dbReference type="Ensembl" id="ENSMUST00000112063.9">
    <property type="protein sequence ID" value="ENSMUSP00000107694.3"/>
    <property type="gene ID" value="ENSMUSG00000030165.18"/>
</dbReference>
<dbReference type="GeneID" id="16643"/>
<dbReference type="KEGG" id="mmu:16643"/>
<dbReference type="UCSC" id="uc009egd.2">
    <property type="organism name" value="mouse"/>
</dbReference>
<dbReference type="AGR" id="MGI:1196275"/>
<dbReference type="CTD" id="3824"/>
<dbReference type="MGI" id="MGI:1196275">
    <property type="gene designation" value="Klrd1"/>
</dbReference>
<dbReference type="VEuPathDB" id="HostDB:ENSMUSG00000030165"/>
<dbReference type="eggNOG" id="KOG4297">
    <property type="taxonomic scope" value="Eukaryota"/>
</dbReference>
<dbReference type="GeneTree" id="ENSGT00940000160107"/>
<dbReference type="HOGENOM" id="CLU_049894_9_3_1"/>
<dbReference type="InParanoid" id="O54707"/>
<dbReference type="OMA" id="RFICERK"/>
<dbReference type="OrthoDB" id="22723at9989"/>
<dbReference type="PhylomeDB" id="O54707"/>
<dbReference type="TreeFam" id="TF336674"/>
<dbReference type="Reactome" id="R-MMU-2172127">
    <property type="pathway name" value="DAP12 interactions"/>
</dbReference>
<dbReference type="Reactome" id="R-MMU-2424491">
    <property type="pathway name" value="DAP12 signaling"/>
</dbReference>
<dbReference type="BioGRID-ORCS" id="16643">
    <property type="hits" value="0 hits in 77 CRISPR screens"/>
</dbReference>
<dbReference type="PRO" id="PR:O54707"/>
<dbReference type="Proteomes" id="UP000000589">
    <property type="component" value="Chromosome 6"/>
</dbReference>
<dbReference type="RNAct" id="O54707">
    <property type="molecule type" value="protein"/>
</dbReference>
<dbReference type="Bgee" id="ENSMUSG00000030165">
    <property type="expression patterns" value="Expressed in peripheral lymph node and 50 other cell types or tissues"/>
</dbReference>
<dbReference type="ExpressionAtlas" id="O54707">
    <property type="expression patterns" value="baseline and differential"/>
</dbReference>
<dbReference type="GO" id="GO:0009897">
    <property type="term" value="C:external side of plasma membrane"/>
    <property type="evidence" value="ECO:0000314"/>
    <property type="project" value="MGI"/>
</dbReference>
<dbReference type="GO" id="GO:0005886">
    <property type="term" value="C:plasma membrane"/>
    <property type="evidence" value="ECO:0000250"/>
    <property type="project" value="UniProtKB"/>
</dbReference>
<dbReference type="GO" id="GO:0043235">
    <property type="term" value="C:receptor complex"/>
    <property type="evidence" value="ECO:0000266"/>
    <property type="project" value="ComplexPortal"/>
</dbReference>
<dbReference type="GO" id="GO:0030246">
    <property type="term" value="F:carbohydrate binding"/>
    <property type="evidence" value="ECO:0007669"/>
    <property type="project" value="UniProtKB-KW"/>
</dbReference>
<dbReference type="GO" id="GO:0062082">
    <property type="term" value="F:HLA-E specific inhibitory MHC class Ib receptor activity"/>
    <property type="evidence" value="ECO:0007669"/>
    <property type="project" value="Ensembl"/>
</dbReference>
<dbReference type="GO" id="GO:0023024">
    <property type="term" value="F:MHC class I protein complex binding"/>
    <property type="evidence" value="ECO:0007669"/>
    <property type="project" value="Ensembl"/>
</dbReference>
<dbReference type="GO" id="GO:0023030">
    <property type="term" value="F:MHC class Ib protein binding, via antigen binding groove"/>
    <property type="evidence" value="ECO:0007669"/>
    <property type="project" value="Ensembl"/>
</dbReference>
<dbReference type="GO" id="GO:1990405">
    <property type="term" value="F:protein antigen binding"/>
    <property type="evidence" value="ECO:0007669"/>
    <property type="project" value="Ensembl"/>
</dbReference>
<dbReference type="GO" id="GO:0002250">
    <property type="term" value="P:adaptive immune response"/>
    <property type="evidence" value="ECO:0007669"/>
    <property type="project" value="UniProtKB-KW"/>
</dbReference>
<dbReference type="GO" id="GO:0002228">
    <property type="term" value="P:natural killer cell mediated immunity"/>
    <property type="evidence" value="ECO:0007669"/>
    <property type="project" value="Ensembl"/>
</dbReference>
<dbReference type="GO" id="GO:0045953">
    <property type="term" value="P:negative regulation of natural killer cell mediated cytotoxicity"/>
    <property type="evidence" value="ECO:0000250"/>
    <property type="project" value="UniProtKB"/>
</dbReference>
<dbReference type="GO" id="GO:0001915">
    <property type="term" value="P:negative regulation of T cell mediated cytotoxicity"/>
    <property type="evidence" value="ECO:0000250"/>
    <property type="project" value="UniProtKB"/>
</dbReference>
<dbReference type="GO" id="GO:0045954">
    <property type="term" value="P:positive regulation of natural killer cell mediated cytotoxicity"/>
    <property type="evidence" value="ECO:0007669"/>
    <property type="project" value="Ensembl"/>
</dbReference>
<dbReference type="GO" id="GO:0032814">
    <property type="term" value="P:regulation of natural killer cell activation"/>
    <property type="evidence" value="ECO:0000303"/>
    <property type="project" value="ComplexPortal"/>
</dbReference>
<dbReference type="GO" id="GO:0002223">
    <property type="term" value="P:stimulatory C-type lectin receptor signaling pathway"/>
    <property type="evidence" value="ECO:0000250"/>
    <property type="project" value="UniProtKB"/>
</dbReference>
<dbReference type="CDD" id="cd03593">
    <property type="entry name" value="CLECT_NK_receptors_like"/>
    <property type="match status" value="1"/>
</dbReference>
<dbReference type="FunFam" id="3.10.100.10:FF:000064">
    <property type="entry name" value="Natural killer cells antigen CD94"/>
    <property type="match status" value="1"/>
</dbReference>
<dbReference type="Gene3D" id="3.10.100.10">
    <property type="entry name" value="Mannose-Binding Protein A, subunit A"/>
    <property type="match status" value="1"/>
</dbReference>
<dbReference type="InterPro" id="IPR001304">
    <property type="entry name" value="C-type_lectin-like"/>
</dbReference>
<dbReference type="InterPro" id="IPR016186">
    <property type="entry name" value="C-type_lectin-like/link_sf"/>
</dbReference>
<dbReference type="InterPro" id="IPR016187">
    <property type="entry name" value="CTDL_fold"/>
</dbReference>
<dbReference type="InterPro" id="IPR050919">
    <property type="entry name" value="NKG2/CD94_NK_receptors"/>
</dbReference>
<dbReference type="InterPro" id="IPR033992">
    <property type="entry name" value="NKR-like_CTLD"/>
</dbReference>
<dbReference type="PANTHER" id="PTHR22800">
    <property type="entry name" value="C-TYPE LECTIN PROTEINS"/>
    <property type="match status" value="1"/>
</dbReference>
<dbReference type="PANTHER" id="PTHR22800:SF252">
    <property type="entry name" value="NATURAL KILLER CELLS ANTIGEN CD94"/>
    <property type="match status" value="1"/>
</dbReference>
<dbReference type="Pfam" id="PF00059">
    <property type="entry name" value="Lectin_C"/>
    <property type="match status" value="1"/>
</dbReference>
<dbReference type="SMART" id="SM00034">
    <property type="entry name" value="CLECT"/>
    <property type="match status" value="1"/>
</dbReference>
<dbReference type="SUPFAM" id="SSF56436">
    <property type="entry name" value="C-type lectin-like"/>
    <property type="match status" value="1"/>
</dbReference>
<dbReference type="PROSITE" id="PS50041">
    <property type="entry name" value="C_TYPE_LECTIN_2"/>
    <property type="match status" value="1"/>
</dbReference>
<feature type="chain" id="PRO_0000378458" description="Natural killer cells antigen CD94">
    <location>
        <begin position="1"/>
        <end position="179"/>
    </location>
</feature>
<feature type="topological domain" description="Cytoplasmic" evidence="2">
    <location>
        <begin position="1"/>
        <end position="10"/>
    </location>
</feature>
<feature type="transmembrane region" description="Helical; Signal-anchor for type II membrane protein" evidence="2">
    <location>
        <begin position="11"/>
        <end position="31"/>
    </location>
</feature>
<feature type="topological domain" description="Extracellular" evidence="2">
    <location>
        <begin position="32"/>
        <end position="179"/>
    </location>
</feature>
<feature type="domain" description="C-type lectin" evidence="3">
    <location>
        <begin position="68"/>
        <end position="175"/>
    </location>
</feature>
<feature type="glycosylation site" description="N-linked (GlcNAc...) asparagine" evidence="2">
    <location>
        <position position="93"/>
    </location>
</feature>
<feature type="glycosylation site" description="N-linked (GlcNAc...) asparagine" evidence="2">
    <location>
        <position position="109"/>
    </location>
</feature>
<feature type="disulfide bond" evidence="3">
    <location>
        <begin position="58"/>
        <end position="70"/>
    </location>
</feature>
<feature type="disulfide bond" description="Interchain (with C-116 in KLRC1/NGK2A)" evidence="3">
    <location>
        <position position="59"/>
    </location>
</feature>
<feature type="disulfide bond" evidence="3">
    <location>
        <begin position="61"/>
        <end position="72"/>
    </location>
</feature>
<feature type="disulfide bond" evidence="3">
    <location>
        <begin position="89"/>
        <end position="174"/>
    </location>
</feature>
<feature type="disulfide bond" evidence="3">
    <location>
        <begin position="152"/>
        <end position="166"/>
    </location>
</feature>
<feature type="sequence variant" evidence="4 5">
    <original>K</original>
    <variation>E</variation>
    <location>
        <position position="83"/>
    </location>
</feature>
<accession>O54707</accession>
<accession>O54708</accession>
<name>KLRD1_MOUSE</name>
<proteinExistence type="evidence at transcript level"/>
<comment type="function">
    <text evidence="1">Immune receptor involved in self-nonself discrimination. In complex with KLRC1 or KLRC2 on cytotoxic and regulatory lymphocyte subsets, recognizes non-classical major histocompatibility (MHC) class Ib molecule MHC-E loaded with self-peptides derived from the signal sequence of classical MHC class Ia and non-classical MHC class Ib molecules. Enables cytotoxic cells to monitor the expression of MHC class I molecules in healthy cells and to tolerate self. Primarily functions as a ligand binding subunit as it lacks the capacity to signal.</text>
</comment>
<comment type="function">
    <text evidence="1">KLRD1-KLRC1 acts as an immune inhibitory receptor. Key inhibitory receptor on natural killer (NK) cells that regulates their activation and effector functions. Dominantly counteracts T cell receptor signaling on a subset of memory/effector CD8-positive T cells as part of an antigen-driven response to avoid autoimmunity. On intraepithelial CD8-positive gamma-delta regulatory T cells triggers TGFB1 secretion, which in turn limits the cytotoxic programming of intraepithelial CD8-positive alpha-beta T cells, distinguishing harmless from pathogenic antigens. In MHC-E-rich tumor microenvironment, acts as an immune inhibitory checkpoint and may contribute to progressive loss of effector functions of NK cells and tumor-specific T cells, a state known as cell exhaustion. Upon MHC-E-peptide binding, transmits intracellular signals through KLRC1 immunoreceptor tyrosine-based inhibition motifs (ITIMs) by recruiting INPP5D/SHIP-1 and INPPL1/SHIP-2 tyrosine phosphatases to ITIMs, and ultimately opposing signals transmitted by activating receptors through dephosphorylation of proximal signaling molecules.</text>
</comment>
<comment type="function">
    <text evidence="1">KLRD1-KLRC2 acts as an immune activating receptor. On cytotoxic lymphocyte subsets recognizes MHC-E loaded with signal sequence-derived peptides from non-classical MHC class Ib MHC-G molecules, likely playing a role in the generation and effector functions of adaptive NK cells and in maternal-fetal tolerance during pregnancy. Regulates the effector functions of terminally differentiated cytotoxic lymphocyte subsets, and in particular may play a role in adaptive NK cell response to viral infection. Upon MHC-E-peptide binding, transmits intracellular signals via the adapter protein TYROBP/DAP12, triggering the phosphorylation of proximal signaling molecules and cell activation.</text>
</comment>
<comment type="subunit">
    <text evidence="1">Can form disulfide-bonded heterodimer with NKG2 family members KLRC1 and KLRC2. KLRD1-KLRC1 heterodimer interacts with peptide-bound MHC-E-B2M heterotrimeric complex. KLRD1 plays a prominent role in directly interacting with MHC-E. KLRD1-KLRC1 interacts with much higher affinity with peptide-bound MHC-E-B2M than KLRD1-KLRC2. Interacts with the adapter protein TYROBP/DAP12; this interaction is required for cell surface expression and cell activation.</text>
</comment>
<comment type="subcellular location">
    <subcellularLocation>
        <location evidence="1">Cell membrane</location>
        <topology evidence="2">Single-pass type II membrane protein</topology>
    </subcellularLocation>
</comment>
<keyword id="KW-1064">Adaptive immunity</keyword>
<keyword id="KW-1003">Cell membrane</keyword>
<keyword id="KW-1015">Disulfide bond</keyword>
<keyword id="KW-0325">Glycoprotein</keyword>
<keyword id="KW-0391">Immunity</keyword>
<keyword id="KW-0399">Innate immunity</keyword>
<keyword id="KW-0430">Lectin</keyword>
<keyword id="KW-0472">Membrane</keyword>
<keyword id="KW-0675">Receptor</keyword>
<keyword id="KW-1185">Reference proteome</keyword>
<keyword id="KW-0735">Signal-anchor</keyword>
<keyword id="KW-0812">Transmembrane</keyword>
<keyword id="KW-1133">Transmembrane helix</keyword>
<organism>
    <name type="scientific">Mus musculus</name>
    <name type="common">Mouse</name>
    <dbReference type="NCBI Taxonomy" id="10090"/>
    <lineage>
        <taxon>Eukaryota</taxon>
        <taxon>Metazoa</taxon>
        <taxon>Chordata</taxon>
        <taxon>Craniata</taxon>
        <taxon>Vertebrata</taxon>
        <taxon>Euteleostomi</taxon>
        <taxon>Mammalia</taxon>
        <taxon>Eutheria</taxon>
        <taxon>Euarchontoglires</taxon>
        <taxon>Glires</taxon>
        <taxon>Rodentia</taxon>
        <taxon>Myomorpha</taxon>
        <taxon>Muroidea</taxon>
        <taxon>Muridae</taxon>
        <taxon>Murinae</taxon>
        <taxon>Mus</taxon>
        <taxon>Mus</taxon>
    </lineage>
</organism>
<gene>
    <name type="primary">Klrd1</name>
    <name type="synonym">Cd94</name>
</gene>
<evidence type="ECO:0000250" key="1">
    <source>
        <dbReference type="UniProtKB" id="Q13241"/>
    </source>
</evidence>
<evidence type="ECO:0000255" key="2"/>
<evidence type="ECO:0000255" key="3">
    <source>
        <dbReference type="PROSITE-ProRule" id="PRU00040"/>
    </source>
</evidence>
<evidence type="ECO:0000269" key="4">
    <source>
    </source>
</evidence>
<evidence type="ECO:0000269" key="5">
    <source ref="5"/>
</evidence>
<reference key="1">
    <citation type="journal article" date="1997" name="Eur. J. Immunol.">
        <title>Cloning of a mouse homolog of CD94 extends the family of C-type lectins on murine natural killer cells.</title>
        <authorList>
            <person name="Vance R.E."/>
            <person name="Tanamachi D.M."/>
            <person name="Hanke T."/>
            <person name="Raulet D.H."/>
        </authorList>
    </citation>
    <scope>NUCLEOTIDE SEQUENCE [MRNA]</scope>
    <scope>VARIANT GLU-83</scope>
    <source>
        <strain>C57BL/6J</strain>
        <strain>CB.17 SCID</strain>
    </source>
</reference>
<reference key="2">
    <citation type="journal article" date="1998" name="Proc. Natl. Acad. Sci. U.S.A.">
        <title>Murine Nkg2d and Cd94 are clustered within the natural killer complex and are expressed independently in natural killer cells.</title>
        <authorList>
            <person name="Ho E.L."/>
            <person name="Heusel J.W."/>
            <person name="Brown M.G."/>
            <person name="Matsumoto K."/>
            <person name="Scalzo A.A."/>
            <person name="Yokoyama W.M."/>
        </authorList>
    </citation>
    <scope>NUCLEOTIDE SEQUENCE [MRNA]</scope>
    <source>
        <strain>C57BL/6J</strain>
    </source>
</reference>
<reference key="3">
    <citation type="submission" date="1997-12" db="EMBL/GenBank/DDBJ databases">
        <title>Mouse natural killer cell receptors homologous to human CD94 and NKG2-D.</title>
        <authorList>
            <person name="Butcher S."/>
            <person name="Cottage A."/>
            <person name="Cook G.P."/>
        </authorList>
    </citation>
    <scope>NUCLEOTIDE SEQUENCE [MRNA]</scope>
    <source>
        <strain>C57BL/6J</strain>
        <tissue>Mammary gland</tissue>
    </source>
</reference>
<reference key="4">
    <citation type="journal article" date="2005" name="Science">
        <title>The transcriptional landscape of the mammalian genome.</title>
        <authorList>
            <person name="Carninci P."/>
            <person name="Kasukawa T."/>
            <person name="Katayama S."/>
            <person name="Gough J."/>
            <person name="Frith M.C."/>
            <person name="Maeda N."/>
            <person name="Oyama R."/>
            <person name="Ravasi T."/>
            <person name="Lenhard B."/>
            <person name="Wells C."/>
            <person name="Kodzius R."/>
            <person name="Shimokawa K."/>
            <person name="Bajic V.B."/>
            <person name="Brenner S.E."/>
            <person name="Batalov S."/>
            <person name="Forrest A.R."/>
            <person name="Zavolan M."/>
            <person name="Davis M.J."/>
            <person name="Wilming L.G."/>
            <person name="Aidinis V."/>
            <person name="Allen J.E."/>
            <person name="Ambesi-Impiombato A."/>
            <person name="Apweiler R."/>
            <person name="Aturaliya R.N."/>
            <person name="Bailey T.L."/>
            <person name="Bansal M."/>
            <person name="Baxter L."/>
            <person name="Beisel K.W."/>
            <person name="Bersano T."/>
            <person name="Bono H."/>
            <person name="Chalk A.M."/>
            <person name="Chiu K.P."/>
            <person name="Choudhary V."/>
            <person name="Christoffels A."/>
            <person name="Clutterbuck D.R."/>
            <person name="Crowe M.L."/>
            <person name="Dalla E."/>
            <person name="Dalrymple B.P."/>
            <person name="de Bono B."/>
            <person name="Della Gatta G."/>
            <person name="di Bernardo D."/>
            <person name="Down T."/>
            <person name="Engstrom P."/>
            <person name="Fagiolini M."/>
            <person name="Faulkner G."/>
            <person name="Fletcher C.F."/>
            <person name="Fukushima T."/>
            <person name="Furuno M."/>
            <person name="Futaki S."/>
            <person name="Gariboldi M."/>
            <person name="Georgii-Hemming P."/>
            <person name="Gingeras T.R."/>
            <person name="Gojobori T."/>
            <person name="Green R.E."/>
            <person name="Gustincich S."/>
            <person name="Harbers M."/>
            <person name="Hayashi Y."/>
            <person name="Hensch T.K."/>
            <person name="Hirokawa N."/>
            <person name="Hill D."/>
            <person name="Huminiecki L."/>
            <person name="Iacono M."/>
            <person name="Ikeo K."/>
            <person name="Iwama A."/>
            <person name="Ishikawa T."/>
            <person name="Jakt M."/>
            <person name="Kanapin A."/>
            <person name="Katoh M."/>
            <person name="Kawasawa Y."/>
            <person name="Kelso J."/>
            <person name="Kitamura H."/>
            <person name="Kitano H."/>
            <person name="Kollias G."/>
            <person name="Krishnan S.P."/>
            <person name="Kruger A."/>
            <person name="Kummerfeld S.K."/>
            <person name="Kurochkin I.V."/>
            <person name="Lareau L.F."/>
            <person name="Lazarevic D."/>
            <person name="Lipovich L."/>
            <person name="Liu J."/>
            <person name="Liuni S."/>
            <person name="McWilliam S."/>
            <person name="Madan Babu M."/>
            <person name="Madera M."/>
            <person name="Marchionni L."/>
            <person name="Matsuda H."/>
            <person name="Matsuzawa S."/>
            <person name="Miki H."/>
            <person name="Mignone F."/>
            <person name="Miyake S."/>
            <person name="Morris K."/>
            <person name="Mottagui-Tabar S."/>
            <person name="Mulder N."/>
            <person name="Nakano N."/>
            <person name="Nakauchi H."/>
            <person name="Ng P."/>
            <person name="Nilsson R."/>
            <person name="Nishiguchi S."/>
            <person name="Nishikawa S."/>
            <person name="Nori F."/>
            <person name="Ohara O."/>
            <person name="Okazaki Y."/>
            <person name="Orlando V."/>
            <person name="Pang K.C."/>
            <person name="Pavan W.J."/>
            <person name="Pavesi G."/>
            <person name="Pesole G."/>
            <person name="Petrovsky N."/>
            <person name="Piazza S."/>
            <person name="Reed J."/>
            <person name="Reid J.F."/>
            <person name="Ring B.Z."/>
            <person name="Ringwald M."/>
            <person name="Rost B."/>
            <person name="Ruan Y."/>
            <person name="Salzberg S.L."/>
            <person name="Sandelin A."/>
            <person name="Schneider C."/>
            <person name="Schoenbach C."/>
            <person name="Sekiguchi K."/>
            <person name="Semple C.A."/>
            <person name="Seno S."/>
            <person name="Sessa L."/>
            <person name="Sheng Y."/>
            <person name="Shibata Y."/>
            <person name="Shimada H."/>
            <person name="Shimada K."/>
            <person name="Silva D."/>
            <person name="Sinclair B."/>
            <person name="Sperling S."/>
            <person name="Stupka E."/>
            <person name="Sugiura K."/>
            <person name="Sultana R."/>
            <person name="Takenaka Y."/>
            <person name="Taki K."/>
            <person name="Tammoja K."/>
            <person name="Tan S.L."/>
            <person name="Tang S."/>
            <person name="Taylor M.S."/>
            <person name="Tegner J."/>
            <person name="Teichmann S.A."/>
            <person name="Ueda H.R."/>
            <person name="van Nimwegen E."/>
            <person name="Verardo R."/>
            <person name="Wei C.L."/>
            <person name="Yagi K."/>
            <person name="Yamanishi H."/>
            <person name="Zabarovsky E."/>
            <person name="Zhu S."/>
            <person name="Zimmer A."/>
            <person name="Hide W."/>
            <person name="Bult C."/>
            <person name="Grimmond S.M."/>
            <person name="Teasdale R.D."/>
            <person name="Liu E.T."/>
            <person name="Brusic V."/>
            <person name="Quackenbush J."/>
            <person name="Wahlestedt C."/>
            <person name="Mattick J.S."/>
            <person name="Hume D.A."/>
            <person name="Kai C."/>
            <person name="Sasaki D."/>
            <person name="Tomaru Y."/>
            <person name="Fukuda S."/>
            <person name="Kanamori-Katayama M."/>
            <person name="Suzuki M."/>
            <person name="Aoki J."/>
            <person name="Arakawa T."/>
            <person name="Iida J."/>
            <person name="Imamura K."/>
            <person name="Itoh M."/>
            <person name="Kato T."/>
            <person name="Kawaji H."/>
            <person name="Kawagashira N."/>
            <person name="Kawashima T."/>
            <person name="Kojima M."/>
            <person name="Kondo S."/>
            <person name="Konno H."/>
            <person name="Nakano K."/>
            <person name="Ninomiya N."/>
            <person name="Nishio T."/>
            <person name="Okada M."/>
            <person name="Plessy C."/>
            <person name="Shibata K."/>
            <person name="Shiraki T."/>
            <person name="Suzuki S."/>
            <person name="Tagami M."/>
            <person name="Waki K."/>
            <person name="Watahiki A."/>
            <person name="Okamura-Oho Y."/>
            <person name="Suzuki H."/>
            <person name="Kawai J."/>
            <person name="Hayashizaki Y."/>
        </authorList>
    </citation>
    <scope>NUCLEOTIDE SEQUENCE [LARGE SCALE MRNA]</scope>
    <source>
        <strain>C57BL/6J</strain>
        <tissue>Cecum</tissue>
    </source>
</reference>
<reference key="5">
    <citation type="submission" date="2005-07" db="EMBL/GenBank/DDBJ databases">
        <authorList>
            <person name="Mural R.J."/>
            <person name="Adams M.D."/>
            <person name="Myers E.W."/>
            <person name="Smith H.O."/>
            <person name="Venter J.C."/>
        </authorList>
    </citation>
    <scope>NUCLEOTIDE SEQUENCE [LARGE SCALE GENOMIC DNA]</scope>
    <scope>VARIANT GLU-83</scope>
</reference>
<reference key="6">
    <citation type="journal article" date="2004" name="Genome Res.">
        <title>The status, quality, and expansion of the NIH full-length cDNA project: the Mammalian Gene Collection (MGC).</title>
        <authorList>
            <consortium name="The MGC Project Team"/>
        </authorList>
    </citation>
    <scope>NUCLEOTIDE SEQUENCE [LARGE SCALE MRNA]</scope>
    <source>
        <tissue>Brain</tissue>
    </source>
</reference>